<keyword id="KW-0342">GTP-binding</keyword>
<keyword id="KW-0378">Hydrolase</keyword>
<keyword id="KW-0479">Metal-binding</keyword>
<keyword id="KW-0547">Nucleotide-binding</keyword>
<keyword id="KW-0554">One-carbon metabolism</keyword>
<keyword id="KW-0862">Zinc</keyword>
<organism>
    <name type="scientific">Bartonella bacilliformis (strain ATCC 35685 / KC583 / Herrer 020/F12,63)</name>
    <dbReference type="NCBI Taxonomy" id="360095"/>
    <lineage>
        <taxon>Bacteria</taxon>
        <taxon>Pseudomonadati</taxon>
        <taxon>Pseudomonadota</taxon>
        <taxon>Alphaproteobacteria</taxon>
        <taxon>Hyphomicrobiales</taxon>
        <taxon>Bartonellaceae</taxon>
        <taxon>Bartonella</taxon>
    </lineage>
</organism>
<accession>A1USJ5</accession>
<sequence length="206" mass="23191">MHSAVEKVAEDLSLSRENLSLEEVEKAIRTLLLWVGENPDREGLLETPKRIAKVYKELFSGYGESVDEILGVVFEEVAGYDEPVIVKDIFFYSHCEHHMIPIIGKAHVAYLPDKKIVGLSKIARVVDVFAHRLQTQETMTAQVANSLKKYLKPRGLAVLIEAEHMCMAMRGVQKQGAATITTSFHGYYKKDQVAQANFMTITRGIR</sequence>
<gene>
    <name evidence="2" type="primary">folE</name>
    <name type="ordered locus">BARBAKC583_0644</name>
</gene>
<evidence type="ECO:0000250" key="1"/>
<evidence type="ECO:0000255" key="2">
    <source>
        <dbReference type="HAMAP-Rule" id="MF_00223"/>
    </source>
</evidence>
<protein>
    <recommendedName>
        <fullName evidence="2">GTP cyclohydrolase 1</fullName>
        <ecNumber evidence="2">3.5.4.16</ecNumber>
    </recommendedName>
    <alternativeName>
        <fullName evidence="2">GTP cyclohydrolase I</fullName>
        <shortName evidence="2">GTP-CH-I</shortName>
    </alternativeName>
</protein>
<name>GCH1_BARBK</name>
<proteinExistence type="inferred from homology"/>
<feature type="chain" id="PRO_1000043664" description="GTP cyclohydrolase 1">
    <location>
        <begin position="1"/>
        <end position="206"/>
    </location>
</feature>
<feature type="binding site" evidence="2">
    <location>
        <position position="95"/>
    </location>
    <ligand>
        <name>Zn(2+)</name>
        <dbReference type="ChEBI" id="CHEBI:29105"/>
    </ligand>
</feature>
<feature type="binding site" evidence="2">
    <location>
        <position position="98"/>
    </location>
    <ligand>
        <name>Zn(2+)</name>
        <dbReference type="ChEBI" id="CHEBI:29105"/>
    </ligand>
</feature>
<feature type="binding site" evidence="2">
    <location>
        <position position="166"/>
    </location>
    <ligand>
        <name>Zn(2+)</name>
        <dbReference type="ChEBI" id="CHEBI:29105"/>
    </ligand>
</feature>
<comment type="catalytic activity">
    <reaction evidence="2">
        <text>GTP + H2O = 7,8-dihydroneopterin 3'-triphosphate + formate + H(+)</text>
        <dbReference type="Rhea" id="RHEA:17473"/>
        <dbReference type="ChEBI" id="CHEBI:15377"/>
        <dbReference type="ChEBI" id="CHEBI:15378"/>
        <dbReference type="ChEBI" id="CHEBI:15740"/>
        <dbReference type="ChEBI" id="CHEBI:37565"/>
        <dbReference type="ChEBI" id="CHEBI:58462"/>
        <dbReference type="EC" id="3.5.4.16"/>
    </reaction>
</comment>
<comment type="pathway">
    <text evidence="2">Cofactor biosynthesis; 7,8-dihydroneopterin triphosphate biosynthesis; 7,8-dihydroneopterin triphosphate from GTP: step 1/1.</text>
</comment>
<comment type="subunit">
    <text evidence="1">Toroid-shaped homodecamer, composed of two pentamers of five dimers.</text>
</comment>
<comment type="similarity">
    <text evidence="2">Belongs to the GTP cyclohydrolase I family.</text>
</comment>
<reference key="1">
    <citation type="submission" date="2006-12" db="EMBL/GenBank/DDBJ databases">
        <authorList>
            <person name="Hendrix L."/>
            <person name="Mohamoud Y."/>
            <person name="Radune D."/>
            <person name="Shvartsbeyn A."/>
            <person name="Daugherty S."/>
            <person name="Dodson R."/>
            <person name="Durkin A.S."/>
            <person name="Harkins D."/>
            <person name="Huot H."/>
            <person name="Kothari S.P."/>
            <person name="Madupu R."/>
            <person name="Li J."/>
            <person name="Nelson W.C."/>
            <person name="Shrivastava S."/>
            <person name="Giglio M.G."/>
            <person name="Haft D."/>
            <person name="Selengut J."/>
            <person name="Fraser-Ligget C."/>
            <person name="Seshadri R."/>
        </authorList>
    </citation>
    <scope>NUCLEOTIDE SEQUENCE [LARGE SCALE GENOMIC DNA]</scope>
    <source>
        <strain>ATCC 35685 / KC583 / Herrer 020/F12,63</strain>
    </source>
</reference>
<dbReference type="EC" id="3.5.4.16" evidence="2"/>
<dbReference type="EMBL" id="CP000524">
    <property type="protein sequence ID" value="ABM44443.1"/>
    <property type="molecule type" value="Genomic_DNA"/>
</dbReference>
<dbReference type="RefSeq" id="WP_005766860.1">
    <property type="nucleotide sequence ID" value="NC_008783.1"/>
</dbReference>
<dbReference type="SMR" id="A1USJ5"/>
<dbReference type="STRING" id="360095.BARBAKC583_0644"/>
<dbReference type="GeneID" id="4684210"/>
<dbReference type="KEGG" id="bbk:BARBAKC583_0644"/>
<dbReference type="PATRIC" id="fig|360095.6.peg.628"/>
<dbReference type="eggNOG" id="COG0302">
    <property type="taxonomic scope" value="Bacteria"/>
</dbReference>
<dbReference type="HOGENOM" id="CLU_049768_3_1_5"/>
<dbReference type="OrthoDB" id="9801207at2"/>
<dbReference type="UniPathway" id="UPA00848">
    <property type="reaction ID" value="UER00151"/>
</dbReference>
<dbReference type="Proteomes" id="UP000000643">
    <property type="component" value="Chromosome"/>
</dbReference>
<dbReference type="GO" id="GO:0005737">
    <property type="term" value="C:cytoplasm"/>
    <property type="evidence" value="ECO:0007669"/>
    <property type="project" value="TreeGrafter"/>
</dbReference>
<dbReference type="GO" id="GO:0005525">
    <property type="term" value="F:GTP binding"/>
    <property type="evidence" value="ECO:0007669"/>
    <property type="project" value="UniProtKB-KW"/>
</dbReference>
<dbReference type="GO" id="GO:0003934">
    <property type="term" value="F:GTP cyclohydrolase I activity"/>
    <property type="evidence" value="ECO:0007669"/>
    <property type="project" value="UniProtKB-UniRule"/>
</dbReference>
<dbReference type="GO" id="GO:0008270">
    <property type="term" value="F:zinc ion binding"/>
    <property type="evidence" value="ECO:0007669"/>
    <property type="project" value="UniProtKB-UniRule"/>
</dbReference>
<dbReference type="GO" id="GO:0006730">
    <property type="term" value="P:one-carbon metabolic process"/>
    <property type="evidence" value="ECO:0007669"/>
    <property type="project" value="UniProtKB-UniRule"/>
</dbReference>
<dbReference type="GO" id="GO:0006729">
    <property type="term" value="P:tetrahydrobiopterin biosynthetic process"/>
    <property type="evidence" value="ECO:0007669"/>
    <property type="project" value="TreeGrafter"/>
</dbReference>
<dbReference type="GO" id="GO:0046654">
    <property type="term" value="P:tetrahydrofolate biosynthetic process"/>
    <property type="evidence" value="ECO:0007669"/>
    <property type="project" value="UniProtKB-UniRule"/>
</dbReference>
<dbReference type="FunFam" id="1.10.286.10:FF:000001">
    <property type="entry name" value="GTP cyclohydrolase 1"/>
    <property type="match status" value="1"/>
</dbReference>
<dbReference type="FunFam" id="3.30.1130.10:FF:000001">
    <property type="entry name" value="GTP cyclohydrolase 1"/>
    <property type="match status" value="1"/>
</dbReference>
<dbReference type="Gene3D" id="1.10.286.10">
    <property type="match status" value="1"/>
</dbReference>
<dbReference type="Gene3D" id="3.30.1130.10">
    <property type="match status" value="1"/>
</dbReference>
<dbReference type="HAMAP" id="MF_00223">
    <property type="entry name" value="FolE"/>
    <property type="match status" value="1"/>
</dbReference>
<dbReference type="InterPro" id="IPR043133">
    <property type="entry name" value="GTP-CH-I_C/QueF"/>
</dbReference>
<dbReference type="InterPro" id="IPR043134">
    <property type="entry name" value="GTP-CH-I_N"/>
</dbReference>
<dbReference type="InterPro" id="IPR001474">
    <property type="entry name" value="GTP_CycHdrlase_I"/>
</dbReference>
<dbReference type="InterPro" id="IPR018234">
    <property type="entry name" value="GTP_CycHdrlase_I_CS"/>
</dbReference>
<dbReference type="InterPro" id="IPR020602">
    <property type="entry name" value="GTP_CycHdrlase_I_dom"/>
</dbReference>
<dbReference type="NCBIfam" id="TIGR00063">
    <property type="entry name" value="folE"/>
    <property type="match status" value="1"/>
</dbReference>
<dbReference type="NCBIfam" id="NF006825">
    <property type="entry name" value="PRK09347.1-2"/>
    <property type="match status" value="1"/>
</dbReference>
<dbReference type="NCBIfam" id="NF006826">
    <property type="entry name" value="PRK09347.1-3"/>
    <property type="match status" value="1"/>
</dbReference>
<dbReference type="PANTHER" id="PTHR11109:SF7">
    <property type="entry name" value="GTP CYCLOHYDROLASE 1"/>
    <property type="match status" value="1"/>
</dbReference>
<dbReference type="PANTHER" id="PTHR11109">
    <property type="entry name" value="GTP CYCLOHYDROLASE I"/>
    <property type="match status" value="1"/>
</dbReference>
<dbReference type="Pfam" id="PF01227">
    <property type="entry name" value="GTP_cyclohydroI"/>
    <property type="match status" value="1"/>
</dbReference>
<dbReference type="SUPFAM" id="SSF55620">
    <property type="entry name" value="Tetrahydrobiopterin biosynthesis enzymes-like"/>
    <property type="match status" value="1"/>
</dbReference>
<dbReference type="PROSITE" id="PS00859">
    <property type="entry name" value="GTP_CYCLOHYDROL_1_1"/>
    <property type="match status" value="1"/>
</dbReference>